<evidence type="ECO:0000255" key="1"/>
<evidence type="ECO:0000256" key="2">
    <source>
        <dbReference type="SAM" id="MobiDB-lite"/>
    </source>
</evidence>
<feature type="chain" id="PRO_0000165239" description="Repressor protein C1">
    <location>
        <begin position="1"/>
        <end position="283"/>
    </location>
</feature>
<feature type="DNA-binding region" description="H-T-H motif" evidence="1">
    <location>
        <begin position="30"/>
        <end position="49"/>
    </location>
</feature>
<feature type="region of interest" description="Disordered" evidence="2">
    <location>
        <begin position="254"/>
        <end position="283"/>
    </location>
</feature>
<name>RPC1_BPP7</name>
<sequence length="283" mass="32499">MINYVYGEQLYQEFVSFRDLFLKKAVARAQHVDAASDGRPVRPVVVLPFKETDSIQAEIDKWTLMARELEQYPDLNIPKTILYPVPNILRGVRKVTTYQTEAVNSVNMTAGRIIHLIDKDIRIQKSAGINEHSAKYIENLEATKELMKQYPEDEKFRMRVHGFSETMLRVHYISSSPNYNDGKSVSYHVPLCGVFICDETLRDGIIINGEFEKAKFSLYDSIEPIICDRWPQAKIYRLADIENVKKQIAITREEKKVKSAASVTRSRKTKKGQPVNDNPESAQ</sequence>
<reference key="1">
    <citation type="journal article" date="1989" name="Nucleic Acids Res.">
        <title>The c1 genes of P1 and P7.</title>
        <authorList>
            <person name="Osborne F.A."/>
            <person name="Stovall S.R."/>
            <person name="Baumstark B.R."/>
        </authorList>
    </citation>
    <scope>NUCLEOTIDE SEQUENCE [GENOMIC DNA]</scope>
    <source>
        <strain>phi amp</strain>
    </source>
</reference>
<organism>
    <name type="scientific">Enterobacteria phage P7</name>
    <name type="common">Bacteriophage P7</name>
    <dbReference type="NCBI Taxonomy" id="10682"/>
    <lineage>
        <taxon>Viruses</taxon>
        <taxon>Duplodnaviria</taxon>
        <taxon>Heunggongvirae</taxon>
        <taxon>Uroviricota</taxon>
        <taxon>Caudoviricetes</taxon>
        <taxon>Punavirus</taxon>
        <taxon>Punavirus P1</taxon>
    </lineage>
</organism>
<dbReference type="EMBL" id="X16006">
    <property type="protein sequence ID" value="CAA34144.1"/>
    <property type="molecule type" value="Genomic_DNA"/>
</dbReference>
<dbReference type="PIR" id="S06183">
    <property type="entry name" value="S06183"/>
</dbReference>
<dbReference type="GO" id="GO:0003677">
    <property type="term" value="F:DNA binding"/>
    <property type="evidence" value="ECO:0007669"/>
    <property type="project" value="UniProtKB-KW"/>
</dbReference>
<dbReference type="InterPro" id="IPR053501">
    <property type="entry name" value="Lysogenic_reg_DNA-binding"/>
</dbReference>
<dbReference type="InterPro" id="IPR016726">
    <property type="entry name" value="Repressor_C1"/>
</dbReference>
<dbReference type="NCBIfam" id="NF041318">
    <property type="entry name" value="phage_rep_C1"/>
    <property type="match status" value="1"/>
</dbReference>
<dbReference type="PIRSF" id="PIRSF018461">
    <property type="entry name" value="Phage_repressor_C1"/>
    <property type="match status" value="1"/>
</dbReference>
<gene>
    <name type="primary">C1</name>
</gene>
<comment type="function">
    <text>Sequence-specific DNA-binding protein required for the establishment and maintenance of lysogeny.</text>
</comment>
<protein>
    <recommendedName>
        <fullName>Repressor protein C1</fullName>
    </recommendedName>
    <alternativeName>
        <fullName>P7c1</fullName>
    </alternativeName>
</protein>
<proteinExistence type="predicted"/>
<organismHost>
    <name type="scientific">Escherichia coli</name>
    <dbReference type="NCBI Taxonomy" id="562"/>
</organismHost>
<keyword id="KW-0238">DNA-binding</keyword>
<keyword id="KW-0678">Repressor</keyword>
<keyword id="KW-0804">Transcription</keyword>
<keyword id="KW-0805">Transcription regulation</keyword>
<accession>P13122</accession>